<keyword id="KW-0456">Lyase</keyword>
<comment type="catalytic activity">
    <reaction>
        <text>(2R,3R)-tartrate = oxaloacetate + H2O</text>
        <dbReference type="Rhea" id="RHEA:15413"/>
        <dbReference type="ChEBI" id="CHEBI:15377"/>
        <dbReference type="ChEBI" id="CHEBI:16452"/>
        <dbReference type="ChEBI" id="CHEBI:30924"/>
        <dbReference type="EC" id="4.2.1.32"/>
    </reaction>
</comment>
<comment type="subunit">
    <text evidence="1">Heterotetramer of two alpha and two beta subunits.</text>
</comment>
<comment type="similarity">
    <text evidence="3">Belongs to the class-I fumarase family.</text>
</comment>
<evidence type="ECO:0000250" key="1"/>
<evidence type="ECO:0000255" key="2"/>
<evidence type="ECO:0000305" key="3"/>
<proteinExistence type="inferred from homology"/>
<dbReference type="EC" id="4.2.1.32"/>
<dbReference type="EMBL" id="CP000036">
    <property type="protein sequence ID" value="ABB67436.1"/>
    <property type="molecule type" value="Genomic_DNA"/>
</dbReference>
<dbReference type="RefSeq" id="WP_000722955.1">
    <property type="nucleotide sequence ID" value="NC_007613.1"/>
</dbReference>
<dbReference type="SMR" id="Q31WX2"/>
<dbReference type="KEGG" id="sbo:SBO_2920"/>
<dbReference type="HOGENOM" id="CLU_098588_0_0_6"/>
<dbReference type="Proteomes" id="UP000007067">
    <property type="component" value="Chromosome"/>
</dbReference>
<dbReference type="GO" id="GO:0008730">
    <property type="term" value="F:L(+)-tartrate dehydratase activity"/>
    <property type="evidence" value="ECO:0007669"/>
    <property type="project" value="UniProtKB-EC"/>
</dbReference>
<dbReference type="FunFam" id="3.20.130.10:FF:000002">
    <property type="entry name" value="L(+)-tartrate dehydratase subunit beta"/>
    <property type="match status" value="1"/>
</dbReference>
<dbReference type="Gene3D" id="3.20.130.10">
    <property type="entry name" value="Fe-S hydro-lyase, tartrate dehydratase beta-type, catalytic domain"/>
    <property type="match status" value="1"/>
</dbReference>
<dbReference type="InterPro" id="IPR004647">
    <property type="entry name" value="Fe-S_hydro-lyase_TtdB-typ_cat"/>
</dbReference>
<dbReference type="InterPro" id="IPR036660">
    <property type="entry name" value="Fe-S_hydroAse_TtdB_cat_sf"/>
</dbReference>
<dbReference type="NCBIfam" id="NF006082">
    <property type="entry name" value="PRK08228.1"/>
    <property type="match status" value="1"/>
</dbReference>
<dbReference type="NCBIfam" id="TIGR00723">
    <property type="entry name" value="ttdB_fumA_fumB"/>
    <property type="match status" value="1"/>
</dbReference>
<dbReference type="PANTHER" id="PTHR43351">
    <property type="entry name" value="L(+)-TARTRATE DEHYDRATASE SUBUNIT BETA"/>
    <property type="match status" value="1"/>
</dbReference>
<dbReference type="PANTHER" id="PTHR43351:SF3">
    <property type="entry name" value="L(+)-TARTRATE DEHYDRATASE SUBUNIT BETA"/>
    <property type="match status" value="1"/>
</dbReference>
<dbReference type="Pfam" id="PF05683">
    <property type="entry name" value="Fumerase_C"/>
    <property type="match status" value="1"/>
</dbReference>
<dbReference type="SUPFAM" id="SSF117457">
    <property type="entry name" value="FumA C-terminal domain-like"/>
    <property type="match status" value="1"/>
</dbReference>
<accession>Q31WX2</accession>
<protein>
    <recommendedName>
        <fullName>L(+)-tartrate dehydratase subunit beta</fullName>
        <shortName>L-TTD beta</shortName>
        <ecNumber>4.2.1.32</ecNumber>
    </recommendedName>
</protein>
<sequence length="201" mass="22637">MKKILTTPIKAEDLQDIRVGDVIYLTGTLVTCRDVCHRRLIELKRPIPYDLNGKAIFHAGPIVRKNGDKWEMVSVGPTTSMRMESFEREFIEQTGVKLVVGKGGMGPLTEEGCQKFKALHVIFPAGCAVLAATQVEEIEEVHWTELGMPESLWVCRGKEFGPLIVSIDTHGNNLIAENKKLFAERRDPIVEEICEHVHYIK</sequence>
<gene>
    <name type="primary">ttdB</name>
    <name type="ordered locus">SBO_2920</name>
</gene>
<feature type="chain" id="PRO_0000262705" description="L(+)-tartrate dehydratase subunit beta">
    <location>
        <begin position="1"/>
        <end position="201"/>
    </location>
</feature>
<feature type="active site" evidence="2">
    <location>
        <position position="37"/>
    </location>
</feature>
<organism>
    <name type="scientific">Shigella boydii serotype 4 (strain Sb227)</name>
    <dbReference type="NCBI Taxonomy" id="300268"/>
    <lineage>
        <taxon>Bacteria</taxon>
        <taxon>Pseudomonadati</taxon>
        <taxon>Pseudomonadota</taxon>
        <taxon>Gammaproteobacteria</taxon>
        <taxon>Enterobacterales</taxon>
        <taxon>Enterobacteriaceae</taxon>
        <taxon>Shigella</taxon>
    </lineage>
</organism>
<reference key="1">
    <citation type="journal article" date="2005" name="Nucleic Acids Res.">
        <title>Genome dynamics and diversity of Shigella species, the etiologic agents of bacillary dysentery.</title>
        <authorList>
            <person name="Yang F."/>
            <person name="Yang J."/>
            <person name="Zhang X."/>
            <person name="Chen L."/>
            <person name="Jiang Y."/>
            <person name="Yan Y."/>
            <person name="Tang X."/>
            <person name="Wang J."/>
            <person name="Xiong Z."/>
            <person name="Dong J."/>
            <person name="Xue Y."/>
            <person name="Zhu Y."/>
            <person name="Xu X."/>
            <person name="Sun L."/>
            <person name="Chen S."/>
            <person name="Nie H."/>
            <person name="Peng J."/>
            <person name="Xu J."/>
            <person name="Wang Y."/>
            <person name="Yuan Z."/>
            <person name="Wen Y."/>
            <person name="Yao Z."/>
            <person name="Shen Y."/>
            <person name="Qiang B."/>
            <person name="Hou Y."/>
            <person name="Yu J."/>
            <person name="Jin Q."/>
        </authorList>
    </citation>
    <scope>NUCLEOTIDE SEQUENCE [LARGE SCALE GENOMIC DNA]</scope>
    <source>
        <strain>Sb227</strain>
    </source>
</reference>
<name>TTDB_SHIBS</name>